<comment type="function">
    <text>Component of the NF-Y/HAP transcription factor complex. The NF-Y complex stimulates the transcription of various genes by recognizing and binding to a CCAAT motif in promoters.</text>
</comment>
<comment type="subunit">
    <text evidence="1">Heterotrimeric transcription factor composed of three components, NF-YA, NF-YB and NF-YC. NF-YB and NF-YC must interact and dimerize for NF-YA association and DNA binding (By similarity).</text>
</comment>
<comment type="interaction">
    <interactant intactId="EBI-15192579">
        <id>Q8VYK4</id>
    </interactant>
    <interactant intactId="EBI-15191737">
        <id>Q58CM8</id>
        <label>NFYC10</label>
    </interactant>
    <organismsDiffer>false</organismsDiffer>
    <experiments>3</experiments>
</comment>
<comment type="interaction">
    <interactant intactId="EBI-15192579">
        <id>Q8VYK4</id>
    </interactant>
    <interactant intactId="EBI-2466133">
        <id>Q9FGP8</id>
        <label>NFYC7</label>
    </interactant>
    <organismsDiffer>false</organismsDiffer>
    <experiments>3</experiments>
</comment>
<comment type="interaction">
    <interactant intactId="EBI-15192579">
        <id>Q8VYK4</id>
    </interactant>
    <interactant intactId="EBI-15191571">
        <id>Q4PSE2</id>
        <label>NFYC8</label>
    </interactant>
    <organismsDiffer>false</organismsDiffer>
    <experiments>3</experiments>
</comment>
<comment type="interaction">
    <interactant intactId="EBI-15192579">
        <id>Q8VYK4</id>
    </interactant>
    <interactant intactId="EBI-2466050">
        <id>Q8L4B2</id>
        <label>NFYC9</label>
    </interactant>
    <organismsDiffer>false</organismsDiffer>
    <experiments>3</experiments>
</comment>
<comment type="subcellular location">
    <subcellularLocation>
        <location evidence="5">Nucleus</location>
    </subcellularLocation>
</comment>
<comment type="tissue specificity">
    <text evidence="4">Expressed in flowers and mature rosettes.</text>
</comment>
<comment type="similarity">
    <text evidence="5">Belongs to the NFYB/HAP3 subunit family.</text>
</comment>
<comment type="sequence caution" evidence="5">
    <conflict type="erroneous gene model prediction">
        <sequence resource="EMBL-CDS" id="AAD18153"/>
    </conflict>
</comment>
<reference key="1">
    <citation type="journal article" date="1999" name="Nature">
        <title>Sequence and analysis of chromosome 2 of the plant Arabidopsis thaliana.</title>
        <authorList>
            <person name="Lin X."/>
            <person name="Kaul S."/>
            <person name="Rounsley S.D."/>
            <person name="Shea T.P."/>
            <person name="Benito M.-I."/>
            <person name="Town C.D."/>
            <person name="Fujii C.Y."/>
            <person name="Mason T.M."/>
            <person name="Bowman C.L."/>
            <person name="Barnstead M.E."/>
            <person name="Feldblyum T.V."/>
            <person name="Buell C.R."/>
            <person name="Ketchum K.A."/>
            <person name="Lee J.J."/>
            <person name="Ronning C.M."/>
            <person name="Koo H.L."/>
            <person name="Moffat K.S."/>
            <person name="Cronin L.A."/>
            <person name="Shen M."/>
            <person name="Pai G."/>
            <person name="Van Aken S."/>
            <person name="Umayam L."/>
            <person name="Tallon L.J."/>
            <person name="Gill J.E."/>
            <person name="Adams M.D."/>
            <person name="Carrera A.J."/>
            <person name="Creasy T.H."/>
            <person name="Goodman H.M."/>
            <person name="Somerville C.R."/>
            <person name="Copenhaver G.P."/>
            <person name="Preuss D."/>
            <person name="Nierman W.C."/>
            <person name="White O."/>
            <person name="Eisen J.A."/>
            <person name="Salzberg S.L."/>
            <person name="Fraser C.M."/>
            <person name="Venter J.C."/>
        </authorList>
    </citation>
    <scope>NUCLEOTIDE SEQUENCE [LARGE SCALE GENOMIC DNA]</scope>
    <source>
        <strain>cv. Columbia</strain>
    </source>
</reference>
<reference key="2">
    <citation type="journal article" date="2017" name="Plant J.">
        <title>Araport11: a complete reannotation of the Arabidopsis thaliana reference genome.</title>
        <authorList>
            <person name="Cheng C.Y."/>
            <person name="Krishnakumar V."/>
            <person name="Chan A.P."/>
            <person name="Thibaud-Nissen F."/>
            <person name="Schobel S."/>
            <person name="Town C.D."/>
        </authorList>
    </citation>
    <scope>GENOME REANNOTATION</scope>
    <source>
        <strain>cv. Columbia</strain>
    </source>
</reference>
<reference key="3">
    <citation type="journal article" date="2003" name="Science">
        <title>Empirical analysis of transcriptional activity in the Arabidopsis genome.</title>
        <authorList>
            <person name="Yamada K."/>
            <person name="Lim J."/>
            <person name="Dale J.M."/>
            <person name="Chen H."/>
            <person name="Shinn P."/>
            <person name="Palm C.J."/>
            <person name="Southwick A.M."/>
            <person name="Wu H.C."/>
            <person name="Kim C.J."/>
            <person name="Nguyen M."/>
            <person name="Pham P.K."/>
            <person name="Cheuk R.F."/>
            <person name="Karlin-Newmann G."/>
            <person name="Liu S.X."/>
            <person name="Lam B."/>
            <person name="Sakano H."/>
            <person name="Wu T."/>
            <person name="Yu G."/>
            <person name="Miranda M."/>
            <person name="Quach H.L."/>
            <person name="Tripp M."/>
            <person name="Chang C.H."/>
            <person name="Lee J.M."/>
            <person name="Toriumi M.J."/>
            <person name="Chan M.M."/>
            <person name="Tang C.C."/>
            <person name="Onodera C.S."/>
            <person name="Deng J.M."/>
            <person name="Akiyama K."/>
            <person name="Ansari Y."/>
            <person name="Arakawa T."/>
            <person name="Banh J."/>
            <person name="Banno F."/>
            <person name="Bowser L."/>
            <person name="Brooks S.Y."/>
            <person name="Carninci P."/>
            <person name="Chao Q."/>
            <person name="Choy N."/>
            <person name="Enju A."/>
            <person name="Goldsmith A.D."/>
            <person name="Gurjal M."/>
            <person name="Hansen N.F."/>
            <person name="Hayashizaki Y."/>
            <person name="Johnson-Hopson C."/>
            <person name="Hsuan V.W."/>
            <person name="Iida K."/>
            <person name="Karnes M."/>
            <person name="Khan S."/>
            <person name="Koesema E."/>
            <person name="Ishida J."/>
            <person name="Jiang P.X."/>
            <person name="Jones T."/>
            <person name="Kawai J."/>
            <person name="Kamiya A."/>
            <person name="Meyers C."/>
            <person name="Nakajima M."/>
            <person name="Narusaka M."/>
            <person name="Seki M."/>
            <person name="Sakurai T."/>
            <person name="Satou M."/>
            <person name="Tamse R."/>
            <person name="Vaysberg M."/>
            <person name="Wallender E.K."/>
            <person name="Wong C."/>
            <person name="Yamamura Y."/>
            <person name="Yuan S."/>
            <person name="Shinozaki K."/>
            <person name="Davis R.W."/>
            <person name="Theologis A."/>
            <person name="Ecker J.R."/>
        </authorList>
    </citation>
    <scope>NUCLEOTIDE SEQUENCE [LARGE SCALE MRNA]</scope>
    <source>
        <strain>cv. Columbia</strain>
    </source>
</reference>
<reference key="4">
    <citation type="journal article" date="2001" name="Gene">
        <title>Regulation of the CCAAT-binding NF-Y subunits in Arabidopsis thaliana.</title>
        <authorList>
            <person name="Gusmaroli G."/>
            <person name="Tonelli C."/>
            <person name="Mantovani R."/>
        </authorList>
    </citation>
    <scope>TISSUE SPECIFICITY</scope>
</reference>
<reference key="5">
    <citation type="journal article" date="2002" name="Gene">
        <title>Regulation of novel members of the Arabidopsis thaliana CCAAT-binding nuclear factor Y subunits.</title>
        <authorList>
            <person name="Gusmaroli G."/>
            <person name="Tonelli C."/>
            <person name="Mantovani R."/>
        </authorList>
    </citation>
    <scope>GENE FAMILY</scope>
    <scope>NOMENCLATURE</scope>
</reference>
<sequence length="173" mass="18998">MAESQAKSPGGCGSHESGGDQSPRSLHVREQDRFLPIANISRIMKRGLPANGKIAKDAKEIVQECVSEFISFVTSEASDKCQREKRKTINGDDLLWAMATLGFEDYMEPLKVYLMRYREMEGDTKGSAKGGDPNAKKDGQSSQNGQFSQLAHQGPYGNSQAQQHMMVPMPGTD</sequence>
<dbReference type="EMBL" id="AC006260">
    <property type="protein sequence ID" value="AAD18153.1"/>
    <property type="status" value="ALT_SEQ"/>
    <property type="molecule type" value="Genomic_DNA"/>
</dbReference>
<dbReference type="EMBL" id="CP002685">
    <property type="protein sequence ID" value="AEC09345.1"/>
    <property type="molecule type" value="Genomic_DNA"/>
</dbReference>
<dbReference type="EMBL" id="CP002685">
    <property type="protein sequence ID" value="AEC09346.1"/>
    <property type="molecule type" value="Genomic_DNA"/>
</dbReference>
<dbReference type="EMBL" id="CP002685">
    <property type="protein sequence ID" value="AEC09347.1"/>
    <property type="molecule type" value="Genomic_DNA"/>
</dbReference>
<dbReference type="EMBL" id="AY070477">
    <property type="protein sequence ID" value="AAL49943.1"/>
    <property type="molecule type" value="mRNA"/>
</dbReference>
<dbReference type="EMBL" id="AY091673">
    <property type="protein sequence ID" value="AAM10272.1"/>
    <property type="molecule type" value="mRNA"/>
</dbReference>
<dbReference type="PIR" id="A84788">
    <property type="entry name" value="A84788"/>
</dbReference>
<dbReference type="SMR" id="Q8VYK4"/>
<dbReference type="BioGRID" id="3626">
    <property type="interactions" value="16"/>
</dbReference>
<dbReference type="FunCoup" id="Q8VYK4">
    <property type="interactions" value="3009"/>
</dbReference>
<dbReference type="IntAct" id="Q8VYK4">
    <property type="interactions" value="9"/>
</dbReference>
<dbReference type="STRING" id="3702.Q8VYK4"/>
<dbReference type="iPTMnet" id="Q8VYK4"/>
<dbReference type="PaxDb" id="3702-AT2G37060.3"/>
<dbReference type="EnsemblPlants" id="AT2G37060.1">
    <property type="protein sequence ID" value="AT2G37060.1"/>
    <property type="gene ID" value="AT2G37060"/>
</dbReference>
<dbReference type="EnsemblPlants" id="AT2G37060.2">
    <property type="protein sequence ID" value="AT2G37060.2"/>
    <property type="gene ID" value="AT2G37060"/>
</dbReference>
<dbReference type="EnsemblPlants" id="AT2G37060.3">
    <property type="protein sequence ID" value="AT2G37060.3"/>
    <property type="gene ID" value="AT2G37060"/>
</dbReference>
<dbReference type="GeneID" id="818282"/>
<dbReference type="Gramene" id="AT2G37060.1">
    <property type="protein sequence ID" value="AT2G37060.1"/>
    <property type="gene ID" value="AT2G37060"/>
</dbReference>
<dbReference type="Gramene" id="AT2G37060.2">
    <property type="protein sequence ID" value="AT2G37060.2"/>
    <property type="gene ID" value="AT2G37060"/>
</dbReference>
<dbReference type="Gramene" id="AT2G37060.3">
    <property type="protein sequence ID" value="AT2G37060.3"/>
    <property type="gene ID" value="AT2G37060"/>
</dbReference>
<dbReference type="KEGG" id="ath:AT2G37060"/>
<dbReference type="Araport" id="AT2G37060"/>
<dbReference type="TAIR" id="AT2G37060">
    <property type="gene designation" value="NF-YB8"/>
</dbReference>
<dbReference type="eggNOG" id="KOG0869">
    <property type="taxonomic scope" value="Eukaryota"/>
</dbReference>
<dbReference type="HOGENOM" id="CLU_066247_13_1_1"/>
<dbReference type="InParanoid" id="Q8VYK4"/>
<dbReference type="OMA" id="YREVNAT"/>
<dbReference type="OrthoDB" id="386949at2759"/>
<dbReference type="PhylomeDB" id="Q8VYK4"/>
<dbReference type="PRO" id="PR:Q8VYK4"/>
<dbReference type="Proteomes" id="UP000006548">
    <property type="component" value="Chromosome 2"/>
</dbReference>
<dbReference type="ExpressionAtlas" id="Q8VYK4">
    <property type="expression patterns" value="baseline and differential"/>
</dbReference>
<dbReference type="GO" id="GO:0016602">
    <property type="term" value="C:CCAAT-binding factor complex"/>
    <property type="evidence" value="ECO:0007669"/>
    <property type="project" value="InterPro"/>
</dbReference>
<dbReference type="GO" id="GO:0001228">
    <property type="term" value="F:DNA-binding transcription activator activity, RNA polymerase II-specific"/>
    <property type="evidence" value="ECO:0007669"/>
    <property type="project" value="InterPro"/>
</dbReference>
<dbReference type="GO" id="GO:0003700">
    <property type="term" value="F:DNA-binding transcription factor activity"/>
    <property type="evidence" value="ECO:0000250"/>
    <property type="project" value="TAIR"/>
</dbReference>
<dbReference type="GO" id="GO:0046982">
    <property type="term" value="F:protein heterodimerization activity"/>
    <property type="evidence" value="ECO:0007669"/>
    <property type="project" value="InterPro"/>
</dbReference>
<dbReference type="GO" id="GO:0043565">
    <property type="term" value="F:sequence-specific DNA binding"/>
    <property type="evidence" value="ECO:0007669"/>
    <property type="project" value="InterPro"/>
</dbReference>
<dbReference type="CDD" id="cd22907">
    <property type="entry name" value="HFD_NFYB"/>
    <property type="match status" value="1"/>
</dbReference>
<dbReference type="FunFam" id="1.10.20.10:FF:000035">
    <property type="entry name" value="Nuclear transcription factor Y subunit B-3"/>
    <property type="match status" value="1"/>
</dbReference>
<dbReference type="Gene3D" id="1.10.20.10">
    <property type="entry name" value="Histone, subunit A"/>
    <property type="match status" value="1"/>
</dbReference>
<dbReference type="InterPro" id="IPR003958">
    <property type="entry name" value="CBFA_NFYB_domain"/>
</dbReference>
<dbReference type="InterPro" id="IPR009072">
    <property type="entry name" value="Histone-fold"/>
</dbReference>
<dbReference type="InterPro" id="IPR027113">
    <property type="entry name" value="Transc_fact_NFYB/HAP3"/>
</dbReference>
<dbReference type="InterPro" id="IPR003956">
    <property type="entry name" value="Transcrpt_fac_NFYB/HAP3_CS"/>
</dbReference>
<dbReference type="PANTHER" id="PTHR11064">
    <property type="entry name" value="CCAAT-BINDING TRANSCRIPTION FACTOR-RELATED"/>
    <property type="match status" value="1"/>
</dbReference>
<dbReference type="PANTHER" id="PTHR11064:SF200">
    <property type="entry name" value="NUCLEAR TRANSCRIPTION FACTOR Y SUBUNIT B-8"/>
    <property type="match status" value="1"/>
</dbReference>
<dbReference type="Pfam" id="PF00808">
    <property type="entry name" value="CBFD_NFYB_HMF"/>
    <property type="match status" value="1"/>
</dbReference>
<dbReference type="PRINTS" id="PR00615">
    <property type="entry name" value="CCAATSUBUNTA"/>
</dbReference>
<dbReference type="SUPFAM" id="SSF47113">
    <property type="entry name" value="Histone-fold"/>
    <property type="match status" value="1"/>
</dbReference>
<dbReference type="PROSITE" id="PS00685">
    <property type="entry name" value="NFYB_HAP3"/>
    <property type="match status" value="1"/>
</dbReference>
<keyword id="KW-0007">Acetylation</keyword>
<keyword id="KW-0010">Activator</keyword>
<keyword id="KW-0238">DNA-binding</keyword>
<keyword id="KW-0539">Nucleus</keyword>
<keyword id="KW-1185">Reference proteome</keyword>
<keyword id="KW-0804">Transcription</keyword>
<keyword id="KW-0805">Transcription regulation</keyword>
<name>NFYB8_ARATH</name>
<accession>Q8VYK4</accession>
<accession>Q9ZQC3</accession>
<evidence type="ECO:0000250" key="1"/>
<evidence type="ECO:0000250" key="2">
    <source>
        <dbReference type="UniProtKB" id="Q9SLG0"/>
    </source>
</evidence>
<evidence type="ECO:0000256" key="3">
    <source>
        <dbReference type="SAM" id="MobiDB-lite"/>
    </source>
</evidence>
<evidence type="ECO:0000269" key="4">
    <source>
    </source>
</evidence>
<evidence type="ECO:0000305" key="5"/>
<organism>
    <name type="scientific">Arabidopsis thaliana</name>
    <name type="common">Mouse-ear cress</name>
    <dbReference type="NCBI Taxonomy" id="3702"/>
    <lineage>
        <taxon>Eukaryota</taxon>
        <taxon>Viridiplantae</taxon>
        <taxon>Streptophyta</taxon>
        <taxon>Embryophyta</taxon>
        <taxon>Tracheophyta</taxon>
        <taxon>Spermatophyta</taxon>
        <taxon>Magnoliopsida</taxon>
        <taxon>eudicotyledons</taxon>
        <taxon>Gunneridae</taxon>
        <taxon>Pentapetalae</taxon>
        <taxon>rosids</taxon>
        <taxon>malvids</taxon>
        <taxon>Brassicales</taxon>
        <taxon>Brassicaceae</taxon>
        <taxon>Camelineae</taxon>
        <taxon>Arabidopsis</taxon>
    </lineage>
</organism>
<gene>
    <name type="primary">NFYB8</name>
    <name type="ordered locus">At2g37060</name>
    <name type="ORF">T2N18.18</name>
</gene>
<protein>
    <recommendedName>
        <fullName>Nuclear transcription factor Y subunit B-8</fullName>
        <shortName>AtNF-YB-8</shortName>
    </recommendedName>
</protein>
<feature type="initiator methionine" description="Removed" evidence="2">
    <location>
        <position position="1"/>
    </location>
</feature>
<feature type="chain" id="PRO_0000204622" description="Nuclear transcription factor Y subunit B-8">
    <location>
        <begin position="2"/>
        <end position="173"/>
    </location>
</feature>
<feature type="DNA-binding region" evidence="1">
    <location>
        <begin position="35"/>
        <end position="41"/>
    </location>
</feature>
<feature type="region of interest" description="Disordered" evidence="3">
    <location>
        <begin position="1"/>
        <end position="30"/>
    </location>
</feature>
<feature type="region of interest" description="Subunit association domain (SAD)" evidence="1">
    <location>
        <begin position="62"/>
        <end position="73"/>
    </location>
</feature>
<feature type="region of interest" description="Disordered" evidence="3">
    <location>
        <begin position="123"/>
        <end position="173"/>
    </location>
</feature>
<feature type="compositionally biased region" description="Polar residues" evidence="3">
    <location>
        <begin position="140"/>
        <end position="163"/>
    </location>
</feature>
<feature type="modified residue" description="N-acetylalanine" evidence="2">
    <location>
        <position position="2"/>
    </location>
</feature>
<proteinExistence type="evidence at protein level"/>